<feature type="chain" id="PRO_0000327797" description="Dihydropteridine reductase">
    <location>
        <begin position="1"/>
        <end position="231"/>
    </location>
</feature>
<feature type="active site" description="Proton acceptor" evidence="2">
    <location>
        <position position="138"/>
    </location>
</feature>
<feature type="binding site" evidence="1">
    <location>
        <begin position="6"/>
        <end position="30"/>
    </location>
    <ligand>
        <name>NADP(+)</name>
        <dbReference type="ChEBI" id="CHEBI:58349"/>
    </ligand>
</feature>
<feature type="strand" evidence="5">
    <location>
        <begin position="4"/>
        <end position="8"/>
    </location>
</feature>
<feature type="turn" evidence="5">
    <location>
        <begin position="9"/>
        <end position="11"/>
    </location>
</feature>
<feature type="helix" evidence="5">
    <location>
        <begin position="13"/>
        <end position="24"/>
    </location>
</feature>
<feature type="strand" evidence="5">
    <location>
        <begin position="28"/>
        <end position="35"/>
    </location>
</feature>
<feature type="strand" evidence="5">
    <location>
        <begin position="40"/>
        <end position="45"/>
    </location>
</feature>
<feature type="helix" evidence="5">
    <location>
        <begin position="51"/>
        <end position="62"/>
    </location>
</feature>
<feature type="turn" evidence="5">
    <location>
        <begin position="63"/>
        <end position="65"/>
    </location>
</feature>
<feature type="strand" evidence="5">
    <location>
        <begin position="68"/>
        <end position="73"/>
    </location>
</feature>
<feature type="helix" evidence="5">
    <location>
        <begin position="88"/>
        <end position="113"/>
    </location>
</feature>
<feature type="strand" evidence="5">
    <location>
        <begin position="114"/>
        <end position="123"/>
    </location>
</feature>
<feature type="helix" evidence="5">
    <location>
        <begin position="126"/>
        <end position="129"/>
    </location>
</feature>
<feature type="helix" evidence="5">
    <location>
        <begin position="136"/>
        <end position="152"/>
    </location>
</feature>
<feature type="strand" evidence="5">
    <location>
        <begin position="157"/>
        <end position="159"/>
    </location>
</feature>
<feature type="strand" evidence="5">
    <location>
        <begin position="164"/>
        <end position="171"/>
    </location>
</feature>
<feature type="helix" evidence="5">
    <location>
        <begin position="176"/>
        <end position="181"/>
    </location>
</feature>
<feature type="helix" evidence="5">
    <location>
        <begin position="187"/>
        <end position="189"/>
    </location>
</feature>
<feature type="helix" evidence="5">
    <location>
        <begin position="193"/>
        <end position="205"/>
    </location>
</feature>
<feature type="helix" evidence="5">
    <location>
        <begin position="207"/>
        <end position="209"/>
    </location>
</feature>
<feature type="strand" evidence="5">
    <location>
        <begin position="216"/>
        <end position="222"/>
    </location>
</feature>
<feature type="strand" evidence="5">
    <location>
        <begin position="225"/>
        <end position="230"/>
    </location>
</feature>
<proteinExistence type="evidence at protein level"/>
<protein>
    <recommendedName>
        <fullName>Dihydropteridine reductase</fullName>
        <ecNumber>1.5.1.34</ecNumber>
    </recommendedName>
    <alternativeName>
        <fullName>Quinoid dihydropteridine reductase</fullName>
    </alternativeName>
</protein>
<gene>
    <name type="primary">qdpr</name>
    <name type="ORF">DDB_G0272684</name>
</gene>
<evidence type="ECO:0000250" key="1"/>
<evidence type="ECO:0000255" key="2">
    <source>
        <dbReference type="PROSITE-ProRule" id="PRU10001"/>
    </source>
</evidence>
<evidence type="ECO:0000269" key="3">
    <source>
    </source>
</evidence>
<evidence type="ECO:0000305" key="4"/>
<evidence type="ECO:0007829" key="5">
    <source>
        <dbReference type="PDB" id="3ORF"/>
    </source>
</evidence>
<reference key="1">
    <citation type="journal article" date="2002" name="Nature">
        <title>Sequence and analysis of chromosome 2 of Dictyostelium discoideum.</title>
        <authorList>
            <person name="Gloeckner G."/>
            <person name="Eichinger L."/>
            <person name="Szafranski K."/>
            <person name="Pachebat J.A."/>
            <person name="Bankier A.T."/>
            <person name="Dear P.H."/>
            <person name="Lehmann R."/>
            <person name="Baumgart C."/>
            <person name="Parra G."/>
            <person name="Abril J.F."/>
            <person name="Guigo R."/>
            <person name="Kumpf K."/>
            <person name="Tunggal B."/>
            <person name="Cox E.C."/>
            <person name="Quail M.A."/>
            <person name="Platzer M."/>
            <person name="Rosenthal A."/>
            <person name="Noegel A.A."/>
        </authorList>
    </citation>
    <scope>NUCLEOTIDE SEQUENCE [LARGE SCALE GENOMIC DNA]</scope>
    <source>
        <strain>AX4</strain>
    </source>
</reference>
<reference key="2">
    <citation type="journal article" date="2005" name="Nature">
        <title>The genome of the social amoeba Dictyostelium discoideum.</title>
        <authorList>
            <person name="Eichinger L."/>
            <person name="Pachebat J.A."/>
            <person name="Gloeckner G."/>
            <person name="Rajandream M.A."/>
            <person name="Sucgang R."/>
            <person name="Berriman M."/>
            <person name="Song J."/>
            <person name="Olsen R."/>
            <person name="Szafranski K."/>
            <person name="Xu Q."/>
            <person name="Tunggal B."/>
            <person name="Kummerfeld S."/>
            <person name="Madera M."/>
            <person name="Konfortov B.A."/>
            <person name="Rivero F."/>
            <person name="Bankier A.T."/>
            <person name="Lehmann R."/>
            <person name="Hamlin N."/>
            <person name="Davies R."/>
            <person name="Gaudet P."/>
            <person name="Fey P."/>
            <person name="Pilcher K."/>
            <person name="Chen G."/>
            <person name="Saunders D."/>
            <person name="Sodergren E.J."/>
            <person name="Davis P."/>
            <person name="Kerhornou A."/>
            <person name="Nie X."/>
            <person name="Hall N."/>
            <person name="Anjard C."/>
            <person name="Hemphill L."/>
            <person name="Bason N."/>
            <person name="Farbrother P."/>
            <person name="Desany B."/>
            <person name="Just E."/>
            <person name="Morio T."/>
            <person name="Rost R."/>
            <person name="Churcher C.M."/>
            <person name="Cooper J."/>
            <person name="Haydock S."/>
            <person name="van Driessche N."/>
            <person name="Cronin A."/>
            <person name="Goodhead I."/>
            <person name="Muzny D.M."/>
            <person name="Mourier T."/>
            <person name="Pain A."/>
            <person name="Lu M."/>
            <person name="Harper D."/>
            <person name="Lindsay R."/>
            <person name="Hauser H."/>
            <person name="James K.D."/>
            <person name="Quiles M."/>
            <person name="Madan Babu M."/>
            <person name="Saito T."/>
            <person name="Buchrieser C."/>
            <person name="Wardroper A."/>
            <person name="Felder M."/>
            <person name="Thangavelu M."/>
            <person name="Johnson D."/>
            <person name="Knights A."/>
            <person name="Loulseged H."/>
            <person name="Mungall K.L."/>
            <person name="Oliver K."/>
            <person name="Price C."/>
            <person name="Quail M.A."/>
            <person name="Urushihara H."/>
            <person name="Hernandez J."/>
            <person name="Rabbinowitsch E."/>
            <person name="Steffen D."/>
            <person name="Sanders M."/>
            <person name="Ma J."/>
            <person name="Kohara Y."/>
            <person name="Sharp S."/>
            <person name="Simmonds M.N."/>
            <person name="Spiegler S."/>
            <person name="Tivey A."/>
            <person name="Sugano S."/>
            <person name="White B."/>
            <person name="Walker D."/>
            <person name="Woodward J.R."/>
            <person name="Winckler T."/>
            <person name="Tanaka Y."/>
            <person name="Shaulsky G."/>
            <person name="Schleicher M."/>
            <person name="Weinstock G.M."/>
            <person name="Rosenthal A."/>
            <person name="Cox E.C."/>
            <person name="Chisholm R.L."/>
            <person name="Gibbs R.A."/>
            <person name="Loomis W.F."/>
            <person name="Platzer M."/>
            <person name="Kay R.R."/>
            <person name="Williams J.G."/>
            <person name="Dear P.H."/>
            <person name="Noegel A.A."/>
            <person name="Barrell B.G."/>
            <person name="Kuspa A."/>
        </authorList>
    </citation>
    <scope>NUCLEOTIDE SEQUENCE [LARGE SCALE GENOMIC DNA]</scope>
    <source>
        <strain>AX4</strain>
    </source>
</reference>
<reference key="3">
    <citation type="journal article" date="2008" name="Acta Crystallogr. F">
        <title>Crystallization and preliminary characterization of dihydropteridine reductase from Dictyostelium discoideum.</title>
        <authorList>
            <person name="Chen C."/>
            <person name="Seo K.H."/>
            <person name="Kim H.L."/>
            <person name="Zhuang N."/>
            <person name="Park Y.S."/>
            <person name="Lee K.H."/>
        </authorList>
    </citation>
    <scope>SUBUNIT</scope>
    <scope>CRYSTALLIZATION</scope>
</reference>
<keyword id="KW-0002">3D-structure</keyword>
<keyword id="KW-0521">NADP</keyword>
<keyword id="KW-0560">Oxidoreductase</keyword>
<keyword id="KW-1185">Reference proteome</keyword>
<keyword id="KW-0783">Tetrahydrobiopterin biosynthesis</keyword>
<organism>
    <name type="scientific">Dictyostelium discoideum</name>
    <name type="common">Social amoeba</name>
    <dbReference type="NCBI Taxonomy" id="44689"/>
    <lineage>
        <taxon>Eukaryota</taxon>
        <taxon>Amoebozoa</taxon>
        <taxon>Evosea</taxon>
        <taxon>Eumycetozoa</taxon>
        <taxon>Dictyostelia</taxon>
        <taxon>Dictyosteliales</taxon>
        <taxon>Dictyosteliaceae</taxon>
        <taxon>Dictyostelium</taxon>
    </lineage>
</organism>
<sequence length="231" mass="24651">MSKNILVLGGSGALGAEVVKFFKSKSWNTISIDFRENPNADHSFTIKDSGEEEIKSVIEKINSKSIKVDTFVCAAGGWSGGNASSDEFLKSVKGMIDMNLYSAFASAHIGAKLLNQGGLFVLTGASAALNRTSGMIAYGATKAATHHIIKDLASENGGLPAGSTSLGILPVTLDTPTNRKYMSDANFDDWTPLSEVAEKLFEWSTNSDSRPTNGSLVKFETKSKVTTWTNL</sequence>
<name>DHPR_DICDI</name>
<comment type="function">
    <text evidence="1">The product of this enzyme, tetrahydrobiopterin (BH-4), is an essential cofactor for phenylalanine, tyrosine, and tryptophan hydroxylases.</text>
</comment>
<comment type="catalytic activity">
    <reaction>
        <text>5,6,7,8-tetrahydropteridine + NAD(+) = 6,7-dihydropteridine + NADH + H(+)</text>
        <dbReference type="Rhea" id="RHEA:17869"/>
        <dbReference type="ChEBI" id="CHEBI:15378"/>
        <dbReference type="ChEBI" id="CHEBI:28889"/>
        <dbReference type="ChEBI" id="CHEBI:30156"/>
        <dbReference type="ChEBI" id="CHEBI:57540"/>
        <dbReference type="ChEBI" id="CHEBI:57945"/>
        <dbReference type="EC" id="1.5.1.34"/>
    </reaction>
</comment>
<comment type="catalytic activity">
    <reaction>
        <text>5,6,7,8-tetrahydropteridine + NADP(+) = 6,7-dihydropteridine + NADPH + H(+)</text>
        <dbReference type="Rhea" id="RHEA:17865"/>
        <dbReference type="ChEBI" id="CHEBI:15378"/>
        <dbReference type="ChEBI" id="CHEBI:28889"/>
        <dbReference type="ChEBI" id="CHEBI:30156"/>
        <dbReference type="ChEBI" id="CHEBI:57783"/>
        <dbReference type="ChEBI" id="CHEBI:58349"/>
        <dbReference type="EC" id="1.5.1.34"/>
    </reaction>
</comment>
<comment type="subunit">
    <text evidence="3">Homodimer.</text>
</comment>
<comment type="similarity">
    <text evidence="4">Belongs to the short-chain dehydrogenases/reductases (SDR) family.</text>
</comment>
<accession>Q86A17</accession>
<accession>Q559B3</accession>
<dbReference type="EC" id="1.5.1.34"/>
<dbReference type="EMBL" id="AAFI02000008">
    <property type="protein sequence ID" value="EAL70979.1"/>
    <property type="molecule type" value="Genomic_DNA"/>
</dbReference>
<dbReference type="RefSeq" id="XP_644903.1">
    <property type="nucleotide sequence ID" value="XM_639811.1"/>
</dbReference>
<dbReference type="PDB" id="3ORF">
    <property type="method" value="X-ray"/>
    <property type="resolution" value="2.16 A"/>
    <property type="chains" value="A/B/C/D=1-231"/>
</dbReference>
<dbReference type="PDBsum" id="3ORF"/>
<dbReference type="SMR" id="Q86A17"/>
<dbReference type="FunCoup" id="Q86A17">
    <property type="interactions" value="129"/>
</dbReference>
<dbReference type="MINT" id="Q86A17"/>
<dbReference type="STRING" id="44689.Q86A17"/>
<dbReference type="PaxDb" id="44689-DDB0237752"/>
<dbReference type="EnsemblProtists" id="EAL70979">
    <property type="protein sequence ID" value="EAL70979"/>
    <property type="gene ID" value="DDB_G0272684"/>
</dbReference>
<dbReference type="GeneID" id="8618582"/>
<dbReference type="KEGG" id="ddi:DDB_G0272684"/>
<dbReference type="dictyBase" id="DDB_G0272684">
    <property type="gene designation" value="qdpr"/>
</dbReference>
<dbReference type="VEuPathDB" id="AmoebaDB:DDB_G0272684"/>
<dbReference type="eggNOG" id="KOG4022">
    <property type="taxonomic scope" value="Eukaryota"/>
</dbReference>
<dbReference type="HOGENOM" id="CLU_010194_22_0_1"/>
<dbReference type="InParanoid" id="Q86A17"/>
<dbReference type="OMA" id="KNYWVGS"/>
<dbReference type="PhylomeDB" id="Q86A17"/>
<dbReference type="BRENDA" id="1.5.1.34">
    <property type="organism ID" value="1939"/>
</dbReference>
<dbReference type="Reactome" id="R-DDI-8964208">
    <property type="pathway name" value="Phenylalanine metabolism"/>
</dbReference>
<dbReference type="EvolutionaryTrace" id="Q86A17"/>
<dbReference type="PRO" id="PR:Q86A17"/>
<dbReference type="Proteomes" id="UP000002195">
    <property type="component" value="Chromosome 2"/>
</dbReference>
<dbReference type="GO" id="GO:0005737">
    <property type="term" value="C:cytoplasm"/>
    <property type="evidence" value="ECO:0000318"/>
    <property type="project" value="GO_Central"/>
</dbReference>
<dbReference type="GO" id="GO:0045335">
    <property type="term" value="C:phagocytic vesicle"/>
    <property type="evidence" value="ECO:0007005"/>
    <property type="project" value="dictyBase"/>
</dbReference>
<dbReference type="GO" id="GO:0004155">
    <property type="term" value="F:6,7-dihydropteridine reductase activity"/>
    <property type="evidence" value="ECO:0000314"/>
    <property type="project" value="dictyBase"/>
</dbReference>
<dbReference type="GO" id="GO:0042802">
    <property type="term" value="F:identical protein binding"/>
    <property type="evidence" value="ECO:0000353"/>
    <property type="project" value="dictyBase"/>
</dbReference>
<dbReference type="GO" id="GO:0051287">
    <property type="term" value="F:NAD binding"/>
    <property type="evidence" value="ECO:0000314"/>
    <property type="project" value="dictyBase"/>
</dbReference>
<dbReference type="GO" id="GO:0070404">
    <property type="term" value="F:NADH binding"/>
    <property type="evidence" value="ECO:0000318"/>
    <property type="project" value="GO_Central"/>
</dbReference>
<dbReference type="GO" id="GO:0070402">
    <property type="term" value="F:NADPH binding"/>
    <property type="evidence" value="ECO:0000318"/>
    <property type="project" value="GO_Central"/>
</dbReference>
<dbReference type="GO" id="GO:0006559">
    <property type="term" value="P:L-phenylalanine catabolic process"/>
    <property type="evidence" value="ECO:0000318"/>
    <property type="project" value="GO_Central"/>
</dbReference>
<dbReference type="GO" id="GO:0006979">
    <property type="term" value="P:response to oxidative stress"/>
    <property type="evidence" value="ECO:0000315"/>
    <property type="project" value="dictyBase"/>
</dbReference>
<dbReference type="GO" id="GO:0006729">
    <property type="term" value="P:tetrahydrobiopterin biosynthetic process"/>
    <property type="evidence" value="ECO:0000315"/>
    <property type="project" value="dictyBase"/>
</dbReference>
<dbReference type="CDD" id="cd05334">
    <property type="entry name" value="DHPR_SDR_c_like"/>
    <property type="match status" value="1"/>
</dbReference>
<dbReference type="FunFam" id="3.40.50.720:FF:000157">
    <property type="entry name" value="Quinoid dihydropteridine reductase"/>
    <property type="match status" value="1"/>
</dbReference>
<dbReference type="Gene3D" id="3.40.50.720">
    <property type="entry name" value="NAD(P)-binding Rossmann-like Domain"/>
    <property type="match status" value="1"/>
</dbReference>
<dbReference type="InterPro" id="IPR036291">
    <property type="entry name" value="NAD(P)-bd_dom_sf"/>
</dbReference>
<dbReference type="InterPro" id="IPR020904">
    <property type="entry name" value="Sc_DH/Rdtase_CS"/>
</dbReference>
<dbReference type="InterPro" id="IPR002347">
    <property type="entry name" value="SDR_fam"/>
</dbReference>
<dbReference type="PANTHER" id="PTHR15104">
    <property type="entry name" value="DIHYDROPTERIDINE REDUCTASE"/>
    <property type="match status" value="1"/>
</dbReference>
<dbReference type="PANTHER" id="PTHR15104:SF0">
    <property type="entry name" value="DIHYDROPTERIDINE REDUCTASE"/>
    <property type="match status" value="1"/>
</dbReference>
<dbReference type="Pfam" id="PF00106">
    <property type="entry name" value="adh_short"/>
    <property type="match status" value="1"/>
</dbReference>
<dbReference type="SUPFAM" id="SSF51735">
    <property type="entry name" value="NAD(P)-binding Rossmann-fold domains"/>
    <property type="match status" value="1"/>
</dbReference>
<dbReference type="PROSITE" id="PS00061">
    <property type="entry name" value="ADH_SHORT"/>
    <property type="match status" value="1"/>
</dbReference>